<keyword id="KW-0133">Cell shape</keyword>
<keyword id="KW-0963">Cytoplasm</keyword>
<keyword id="KW-0342">GTP-binding</keyword>
<keyword id="KW-0547">Nucleotide-binding</keyword>
<keyword id="KW-1185">Reference proteome</keyword>
<sequence>MKLALIGIGQAGGKVVDALVDYERRTKTGFVVDAIAVNSARADLRGLRTAPESRQVLVGLTRVKGHGVGADNELGAEVIAEDVGEVLSMIDDLPVHEIDAFLVVAGLGGGTGSGGAPVIARELKHIYTEPVYGLGILPARDEGGIYTLNAARSFQTFVREVDNLIVFDNDAWRKTGESLEAGYGSLNAELARRLGVLFSAGEGDGSGAVAESVVDASEIINTLGSGGVSTIGYAAVELDRPKRGLLSRLSGGKAEADDGGDSTNRITSLVRRAALGRLTLPCEISGAERGLVVVAGPSDVLSRRGIERARTWLEDETGTMEIRGGDYPIDSNFVAAVVLLSGVYDVPRVKELQAVAIETQRDMLAKRESSAASLDDLVSTGDDRIEPLF</sequence>
<protein>
    <recommendedName>
        <fullName evidence="4">Tubulin-like protein CetZ3</fullName>
    </recommendedName>
    <alternativeName>
        <fullName evidence="3">Cell-structure-related euryarchaeota tubulin/FtsZ homolog 3</fullName>
    </alternativeName>
</protein>
<name>CETZ3_HALVD</name>
<reference key="1">
    <citation type="journal article" date="2010" name="PLoS ONE">
        <title>The complete genome sequence of Haloferax volcanii DS2, a model archaeon.</title>
        <authorList>
            <person name="Hartman A.L."/>
            <person name="Norais C."/>
            <person name="Badger J.H."/>
            <person name="Delmas S."/>
            <person name="Haldenby S."/>
            <person name="Madupu R."/>
            <person name="Robinson J."/>
            <person name="Khouri H."/>
            <person name="Ren Q."/>
            <person name="Lowe T.M."/>
            <person name="Maupin-Furlow J."/>
            <person name="Pohlschroder M."/>
            <person name="Daniels C."/>
            <person name="Pfeiffer F."/>
            <person name="Allers T."/>
            <person name="Eisen J.A."/>
        </authorList>
    </citation>
    <scope>NUCLEOTIDE SEQUENCE [LARGE SCALE GENOMIC DNA]</scope>
    <source>
        <strain>ATCC 29605 / DSM 3757 / JCM 8879 / NBRC 14742 / NCIMB 2012 / VKM B-1768 / DS2</strain>
    </source>
</reference>
<reference key="2">
    <citation type="journal article" date="2014" name="PLoS Genet.">
        <title>Phylogenetically driven sequencing of extremely halophilic archaea reveals strategies for static and dynamic osmo-response.</title>
        <authorList>
            <person name="Becker E.A."/>
            <person name="Seitzer P.M."/>
            <person name="Tritt A."/>
            <person name="Larsen D."/>
            <person name="Krusor M."/>
            <person name="Yao A.I."/>
            <person name="Wu D."/>
            <person name="Madern D."/>
            <person name="Eisen J.A."/>
            <person name="Darling A.E."/>
            <person name="Facciotti M.T."/>
        </authorList>
    </citation>
    <scope>NUCLEOTIDE SEQUENCE [LARGE SCALE GENOMIC DNA]</scope>
    <source>
        <strain>ATCC 29605 / DSM 3757 / JCM 8879 / NBRC 14742 / NCIMB 2012 / VKM B-1768 / DS2</strain>
    </source>
</reference>
<reference key="3">
    <citation type="journal article" date="2015" name="Nature">
        <title>CetZ tubulin-like proteins control archaeal cell shape.</title>
        <authorList>
            <person name="Duggin I.G."/>
            <person name="Aylett C.H."/>
            <person name="Walsh J.C."/>
            <person name="Michie K.A."/>
            <person name="Wang Q."/>
            <person name="Turnbull L."/>
            <person name="Dawson E.M."/>
            <person name="Harry E.J."/>
            <person name="Whitchurch C.B."/>
            <person name="Amos L.A."/>
            <person name="Loewe J."/>
        </authorList>
    </citation>
    <scope>DISRUPTION PHENOTYPE</scope>
</reference>
<accession>D4GW48</accession>
<comment type="function">
    <text evidence="1">Involved in cell shape control.</text>
</comment>
<comment type="subcellular location">
    <subcellularLocation>
        <location evidence="1">Cytoplasm</location>
    </subcellularLocation>
</comment>
<comment type="disruption phenotype">
    <text evidence="2">Does not affect motility. No differences in growth rate or cell size.</text>
</comment>
<comment type="similarity">
    <text evidence="1 4">Belongs to the CetZ family.</text>
</comment>
<proteinExistence type="inferred from homology"/>
<evidence type="ECO:0000255" key="1">
    <source>
        <dbReference type="HAMAP-Rule" id="MF_01946"/>
    </source>
</evidence>
<evidence type="ECO:0000269" key="2">
    <source>
    </source>
</evidence>
<evidence type="ECO:0000303" key="3">
    <source>
    </source>
</evidence>
<evidence type="ECO:0000305" key="4"/>
<evidence type="ECO:0000312" key="5">
    <source>
        <dbReference type="EMBL" id="ADE04596.1"/>
    </source>
</evidence>
<evidence type="ECO:0000312" key="6">
    <source>
        <dbReference type="EMBL" id="ELY28197.1"/>
    </source>
</evidence>
<organism>
    <name type="scientific">Haloferax volcanii (strain ATCC 29605 / DSM 3757 / JCM 8879 / NBRC 14742 / NCIMB 2012 / VKM B-1768 / DS2)</name>
    <name type="common">Halobacterium volcanii</name>
    <dbReference type="NCBI Taxonomy" id="309800"/>
    <lineage>
        <taxon>Archaea</taxon>
        <taxon>Methanobacteriati</taxon>
        <taxon>Methanobacteriota</taxon>
        <taxon>Stenosarchaea group</taxon>
        <taxon>Halobacteria</taxon>
        <taxon>Halobacteriales</taxon>
        <taxon>Haloferacaceae</taxon>
        <taxon>Haloferax</taxon>
    </lineage>
</organism>
<gene>
    <name evidence="3" type="primary">cetZ3</name>
    <name evidence="5" type="synonym">ftsZ5</name>
    <name evidence="5" type="ordered locus">HVO_1113</name>
    <name evidence="6" type="ORF">C498_13178</name>
</gene>
<dbReference type="EMBL" id="CP001956">
    <property type="protein sequence ID" value="ADE04596.1"/>
    <property type="molecule type" value="Genomic_DNA"/>
</dbReference>
<dbReference type="EMBL" id="AOHU01000091">
    <property type="protein sequence ID" value="ELY28197.1"/>
    <property type="molecule type" value="Genomic_DNA"/>
</dbReference>
<dbReference type="RefSeq" id="WP_004043824.1">
    <property type="nucleotide sequence ID" value="NC_013967.1"/>
</dbReference>
<dbReference type="SMR" id="D4GW48"/>
<dbReference type="STRING" id="309800.HVO_1113"/>
<dbReference type="PaxDb" id="309800-C498_13178"/>
<dbReference type="EnsemblBacteria" id="ADE04596">
    <property type="protein sequence ID" value="ADE04596"/>
    <property type="gene ID" value="HVO_1113"/>
</dbReference>
<dbReference type="GeneID" id="8923903"/>
<dbReference type="KEGG" id="hvo:HVO_1113"/>
<dbReference type="PATRIC" id="fig|309800.29.peg.2530"/>
<dbReference type="eggNOG" id="arCOG02202">
    <property type="taxonomic scope" value="Archaea"/>
</dbReference>
<dbReference type="HOGENOM" id="CLU_058152_0_0_2"/>
<dbReference type="OrthoDB" id="329751at2157"/>
<dbReference type="Proteomes" id="UP000008243">
    <property type="component" value="Chromosome"/>
</dbReference>
<dbReference type="Proteomes" id="UP000011532">
    <property type="component" value="Unassembled WGS sequence"/>
</dbReference>
<dbReference type="GO" id="GO:0032153">
    <property type="term" value="C:cell division site"/>
    <property type="evidence" value="ECO:0007669"/>
    <property type="project" value="TreeGrafter"/>
</dbReference>
<dbReference type="GO" id="GO:0005737">
    <property type="term" value="C:cytoplasm"/>
    <property type="evidence" value="ECO:0007669"/>
    <property type="project" value="UniProtKB-SubCell"/>
</dbReference>
<dbReference type="GO" id="GO:0005874">
    <property type="term" value="C:microtubule"/>
    <property type="evidence" value="ECO:0007669"/>
    <property type="project" value="InterPro"/>
</dbReference>
<dbReference type="GO" id="GO:0005525">
    <property type="term" value="F:GTP binding"/>
    <property type="evidence" value="ECO:0007669"/>
    <property type="project" value="UniProtKB-UniRule"/>
</dbReference>
<dbReference type="GO" id="GO:0003924">
    <property type="term" value="F:GTPase activity"/>
    <property type="evidence" value="ECO:0007669"/>
    <property type="project" value="InterPro"/>
</dbReference>
<dbReference type="GO" id="GO:0051301">
    <property type="term" value="P:cell division"/>
    <property type="evidence" value="ECO:0007669"/>
    <property type="project" value="TreeGrafter"/>
</dbReference>
<dbReference type="GO" id="GO:0007017">
    <property type="term" value="P:microtubule-based process"/>
    <property type="evidence" value="ECO:0007669"/>
    <property type="project" value="InterPro"/>
</dbReference>
<dbReference type="GO" id="GO:0008360">
    <property type="term" value="P:regulation of cell shape"/>
    <property type="evidence" value="ECO:0007669"/>
    <property type="project" value="UniProtKB-UniRule"/>
</dbReference>
<dbReference type="CDD" id="cd02202">
    <property type="entry name" value="CetZ_tubulin-like"/>
    <property type="match status" value="1"/>
</dbReference>
<dbReference type="FunFam" id="3.40.50.1440:FF:000051">
    <property type="entry name" value="Tubulin-like protein CetZ"/>
    <property type="match status" value="1"/>
</dbReference>
<dbReference type="Gene3D" id="3.30.1330.20">
    <property type="entry name" value="Tubulin/FtsZ, C-terminal domain"/>
    <property type="match status" value="1"/>
</dbReference>
<dbReference type="Gene3D" id="3.40.50.1440">
    <property type="entry name" value="Tubulin/FtsZ, GTPase domain"/>
    <property type="match status" value="1"/>
</dbReference>
<dbReference type="HAMAP" id="MF_01946">
    <property type="entry name" value="CetZ"/>
    <property type="match status" value="1"/>
</dbReference>
<dbReference type="InterPro" id="IPR032907">
    <property type="entry name" value="CetZ"/>
</dbReference>
<dbReference type="InterPro" id="IPR048737">
    <property type="entry name" value="CetZ_C"/>
</dbReference>
<dbReference type="InterPro" id="IPR045061">
    <property type="entry name" value="FtsZ/CetZ"/>
</dbReference>
<dbReference type="InterPro" id="IPR037103">
    <property type="entry name" value="Tubulin/FtsZ-like_C"/>
</dbReference>
<dbReference type="InterPro" id="IPR036525">
    <property type="entry name" value="Tubulin/FtsZ_GTPase_sf"/>
</dbReference>
<dbReference type="InterPro" id="IPR017975">
    <property type="entry name" value="Tubulin_CS"/>
</dbReference>
<dbReference type="InterPro" id="IPR003008">
    <property type="entry name" value="Tubulin_FtsZ_GTPase"/>
</dbReference>
<dbReference type="PANTHER" id="PTHR30314">
    <property type="entry name" value="CELL DIVISION PROTEIN FTSZ-RELATED"/>
    <property type="match status" value="1"/>
</dbReference>
<dbReference type="PANTHER" id="PTHR30314:SF10">
    <property type="entry name" value="TUBULIN-LIKE PROTEIN CETZ"/>
    <property type="match status" value="1"/>
</dbReference>
<dbReference type="Pfam" id="PF21011">
    <property type="entry name" value="CetZ_C"/>
    <property type="match status" value="1"/>
</dbReference>
<dbReference type="Pfam" id="PF00091">
    <property type="entry name" value="Tubulin"/>
    <property type="match status" value="1"/>
</dbReference>
<dbReference type="SMART" id="SM00864">
    <property type="entry name" value="Tubulin"/>
    <property type="match status" value="1"/>
</dbReference>
<dbReference type="SUPFAM" id="SSF52490">
    <property type="entry name" value="Tubulin nucleotide-binding domain-like"/>
    <property type="match status" value="1"/>
</dbReference>
<dbReference type="PROSITE" id="PS00227">
    <property type="entry name" value="TUBULIN"/>
    <property type="match status" value="1"/>
</dbReference>
<feature type="chain" id="PRO_0000432185" description="Tubulin-like protein CetZ3">
    <location>
        <begin position="1"/>
        <end position="389"/>
    </location>
</feature>
<feature type="binding site" evidence="1">
    <location>
        <begin position="10"/>
        <end position="14"/>
    </location>
    <ligand>
        <name>GTP</name>
        <dbReference type="ChEBI" id="CHEBI:37565"/>
    </ligand>
</feature>
<feature type="binding site" evidence="1">
    <location>
        <begin position="110"/>
        <end position="112"/>
    </location>
    <ligand>
        <name>GTP</name>
        <dbReference type="ChEBI" id="CHEBI:37565"/>
    </ligand>
</feature>
<feature type="binding site" evidence="1">
    <location>
        <position position="142"/>
    </location>
    <ligand>
        <name>GTP</name>
        <dbReference type="ChEBI" id="CHEBI:37565"/>
    </ligand>
</feature>
<feature type="binding site" evidence="1">
    <location>
        <position position="169"/>
    </location>
    <ligand>
        <name>GTP</name>
        <dbReference type="ChEBI" id="CHEBI:37565"/>
    </ligand>
</feature>
<feature type="binding site" evidence="1">
    <location>
        <position position="187"/>
    </location>
    <ligand>
        <name>GTP</name>
        <dbReference type="ChEBI" id="CHEBI:37565"/>
    </ligand>
</feature>